<organism>
    <name type="scientific">African swine fever virus (isolate Warthog/Namibia/Wart80/1980)</name>
    <name type="common">ASFV</name>
    <dbReference type="NCBI Taxonomy" id="561444"/>
    <lineage>
        <taxon>Viruses</taxon>
        <taxon>Varidnaviria</taxon>
        <taxon>Bamfordvirae</taxon>
        <taxon>Nucleocytoviricota</taxon>
        <taxon>Pokkesviricetes</taxon>
        <taxon>Asfuvirales</taxon>
        <taxon>Asfarviridae</taxon>
        <taxon>Asfivirus</taxon>
        <taxon>African swine fever virus</taxon>
    </lineage>
</organism>
<accession>P0CA86</accession>
<evidence type="ECO:0000305" key="1"/>
<feature type="chain" id="PRO_0000373571" description="Uncharacterized protein S183L">
    <location>
        <begin position="1"/>
        <end position="183"/>
    </location>
</feature>
<reference key="1">
    <citation type="submission" date="2003-03" db="EMBL/GenBank/DDBJ databases">
        <title>African swine fever virus genomes.</title>
        <authorList>
            <person name="Kutish G.F."/>
            <person name="Rock D.L."/>
        </authorList>
    </citation>
    <scope>NUCLEOTIDE SEQUENCE [LARGE SCALE GENOMIC DNA]</scope>
</reference>
<comment type="induction">
    <text evidence="1">Expressed in the late phase of the viral replicative cycle.</text>
</comment>
<comment type="similarity">
    <text evidence="1">Belongs to the asfivirus S183L family.</text>
</comment>
<dbReference type="EMBL" id="AY261366">
    <property type="status" value="NOT_ANNOTATED_CDS"/>
    <property type="molecule type" value="Genomic_DNA"/>
</dbReference>
<dbReference type="Proteomes" id="UP000000858">
    <property type="component" value="Segment"/>
</dbReference>
<name>VF183_ASFWA</name>
<protein>
    <recommendedName>
        <fullName>Uncharacterized protein S183L</fullName>
        <shortName>pS183L</shortName>
    </recommendedName>
</protein>
<keyword id="KW-0426">Late protein</keyword>
<proteinExistence type="inferred from homology"/>
<sequence>MSVVVGGVEYSLNNWARYEIKRRAAELESVNYYPHCEYVMPEDIVVSILGSKPNCPFLEALKRFHDFLKKRRVIFKGEYLVIPWMGAQDVADMIHHVENRINLDHLEDLAHMLKLITYHRSFDTCINQSFEQLYAFKFPDANIETHELKHIRQLEKKMYGYILRLEKLQTVLTFYIEFLLKQV</sequence>
<organismHost>
    <name type="scientific">Ornithodoros</name>
    <name type="common">relapsing fever ticks</name>
    <dbReference type="NCBI Taxonomy" id="6937"/>
</organismHost>
<organismHost>
    <name type="scientific">Phacochoerus aethiopicus</name>
    <name type="common">Warthog</name>
    <dbReference type="NCBI Taxonomy" id="85517"/>
</organismHost>
<organismHost>
    <name type="scientific">Phacochoerus africanus</name>
    <name type="common">Warthog</name>
    <dbReference type="NCBI Taxonomy" id="41426"/>
</organismHost>
<organismHost>
    <name type="scientific">Potamochoerus larvatus</name>
    <name type="common">Bushpig</name>
    <dbReference type="NCBI Taxonomy" id="273792"/>
</organismHost>
<organismHost>
    <name type="scientific">Sus scrofa</name>
    <name type="common">Pig</name>
    <dbReference type="NCBI Taxonomy" id="9823"/>
</organismHost>
<gene>
    <name type="ordered locus">War-120</name>
</gene>